<reference key="1">
    <citation type="journal article" date="2000" name="DNA Res.">
        <title>Structural analysis of Arabidopsis thaliana chromosome 3. II. Sequence features of the 4,251,695 bp regions covered by 90 P1, TAC and BAC clones.</title>
        <authorList>
            <person name="Kaneko T."/>
            <person name="Katoh T."/>
            <person name="Sato S."/>
            <person name="Nakamura Y."/>
            <person name="Asamizu E."/>
            <person name="Tabata S."/>
        </authorList>
    </citation>
    <scope>NUCLEOTIDE SEQUENCE [LARGE SCALE GENOMIC DNA]</scope>
    <source>
        <strain>cv. Columbia</strain>
    </source>
</reference>
<reference key="2">
    <citation type="journal article" date="2017" name="Plant J.">
        <title>Araport11: a complete reannotation of the Arabidopsis thaliana reference genome.</title>
        <authorList>
            <person name="Cheng C.Y."/>
            <person name="Krishnakumar V."/>
            <person name="Chan A.P."/>
            <person name="Thibaud-Nissen F."/>
            <person name="Schobel S."/>
            <person name="Town C.D."/>
        </authorList>
    </citation>
    <scope>GENOME REANNOTATION</scope>
    <source>
        <strain>cv. Columbia</strain>
    </source>
</reference>
<reference key="3">
    <citation type="journal article" date="2003" name="Science">
        <title>Empirical analysis of transcriptional activity in the Arabidopsis genome.</title>
        <authorList>
            <person name="Yamada K."/>
            <person name="Lim J."/>
            <person name="Dale J.M."/>
            <person name="Chen H."/>
            <person name="Shinn P."/>
            <person name="Palm C.J."/>
            <person name="Southwick A.M."/>
            <person name="Wu H.C."/>
            <person name="Kim C.J."/>
            <person name="Nguyen M."/>
            <person name="Pham P.K."/>
            <person name="Cheuk R.F."/>
            <person name="Karlin-Newmann G."/>
            <person name="Liu S.X."/>
            <person name="Lam B."/>
            <person name="Sakano H."/>
            <person name="Wu T."/>
            <person name="Yu G."/>
            <person name="Miranda M."/>
            <person name="Quach H.L."/>
            <person name="Tripp M."/>
            <person name="Chang C.H."/>
            <person name="Lee J.M."/>
            <person name="Toriumi M.J."/>
            <person name="Chan M.M."/>
            <person name="Tang C.C."/>
            <person name="Onodera C.S."/>
            <person name="Deng J.M."/>
            <person name="Akiyama K."/>
            <person name="Ansari Y."/>
            <person name="Arakawa T."/>
            <person name="Banh J."/>
            <person name="Banno F."/>
            <person name="Bowser L."/>
            <person name="Brooks S.Y."/>
            <person name="Carninci P."/>
            <person name="Chao Q."/>
            <person name="Choy N."/>
            <person name="Enju A."/>
            <person name="Goldsmith A.D."/>
            <person name="Gurjal M."/>
            <person name="Hansen N.F."/>
            <person name="Hayashizaki Y."/>
            <person name="Johnson-Hopson C."/>
            <person name="Hsuan V.W."/>
            <person name="Iida K."/>
            <person name="Karnes M."/>
            <person name="Khan S."/>
            <person name="Koesema E."/>
            <person name="Ishida J."/>
            <person name="Jiang P.X."/>
            <person name="Jones T."/>
            <person name="Kawai J."/>
            <person name="Kamiya A."/>
            <person name="Meyers C."/>
            <person name="Nakajima M."/>
            <person name="Narusaka M."/>
            <person name="Seki M."/>
            <person name="Sakurai T."/>
            <person name="Satou M."/>
            <person name="Tamse R."/>
            <person name="Vaysberg M."/>
            <person name="Wallender E.K."/>
            <person name="Wong C."/>
            <person name="Yamamura Y."/>
            <person name="Yuan S."/>
            <person name="Shinozaki K."/>
            <person name="Davis R.W."/>
            <person name="Theologis A."/>
            <person name="Ecker J.R."/>
        </authorList>
    </citation>
    <scope>NUCLEOTIDE SEQUENCE [LARGE SCALE MRNA]</scope>
    <source>
        <strain>cv. Columbia</strain>
    </source>
</reference>
<protein>
    <recommendedName>
        <fullName>Uncharacterized exonuclease domain-containing protein At3g15140</fullName>
        <ecNumber>3.1.-.-</ecNumber>
    </recommendedName>
</protein>
<sequence>MASAFSAFRVSLSRISPFRDTRFSYPATLALAHTKRIMCNSSHSVSPSPSPSDFSSSSSSSSSSPSTFSLMETSENARWRPMCLYYTHGKCTKMDDPAHLEIFNHDCSKELRVAAADLERKKSQEFNFFLVIDLEGKVEILEFPILIVDAKTMEVVDLFHRFVRPTKMSEQAINKYIEGKYGELGVDRVWHDTAIPFKQVVEEFEVWLAEHDLWDKDTDWGLNDAAFVTCGNWDIKTKIPEQCVVSNINLPPYFMEWINLKDVYLNFYGREARGMVSMMRQCGIKLMGSHHLGIDDTKNITRVVQRMLSEGAVLKLTARRSKSNMRNVEFLFKNRIK</sequence>
<keyword id="KW-0269">Exonuclease</keyword>
<keyword id="KW-0378">Hydrolase</keyword>
<keyword id="KW-0460">Magnesium</keyword>
<keyword id="KW-0479">Metal-binding</keyword>
<keyword id="KW-0540">Nuclease</keyword>
<keyword id="KW-1185">Reference proteome</keyword>
<name>Y3514_ARATH</name>
<organism>
    <name type="scientific">Arabidopsis thaliana</name>
    <name type="common">Mouse-ear cress</name>
    <dbReference type="NCBI Taxonomy" id="3702"/>
    <lineage>
        <taxon>Eukaryota</taxon>
        <taxon>Viridiplantae</taxon>
        <taxon>Streptophyta</taxon>
        <taxon>Embryophyta</taxon>
        <taxon>Tracheophyta</taxon>
        <taxon>Spermatophyta</taxon>
        <taxon>Magnoliopsida</taxon>
        <taxon>eudicotyledons</taxon>
        <taxon>Gunneridae</taxon>
        <taxon>Pentapetalae</taxon>
        <taxon>rosids</taxon>
        <taxon>malvids</taxon>
        <taxon>Brassicales</taxon>
        <taxon>Brassicaceae</taxon>
        <taxon>Camelineae</taxon>
        <taxon>Arabidopsis</taxon>
    </lineage>
</organism>
<comment type="sequence caution" evidence="4">
    <conflict type="erroneous gene model prediction">
        <sequence resource="EMBL-CDS" id="BAB02568"/>
    </conflict>
    <text>The predicted gene has been split into 2 genes: At3g15130 and At3g15140.</text>
</comment>
<accession>Q8W566</accession>
<accession>Q9LIM1</accession>
<gene>
    <name type="ordered locus">At3g15140</name>
    <name type="ORF">F4B12.5</name>
</gene>
<evidence type="ECO:0000250" key="1"/>
<evidence type="ECO:0000255" key="2"/>
<evidence type="ECO:0000256" key="3">
    <source>
        <dbReference type="SAM" id="MobiDB-lite"/>
    </source>
</evidence>
<evidence type="ECO:0000305" key="4"/>
<dbReference type="EC" id="3.1.-.-"/>
<dbReference type="EMBL" id="AP001299">
    <property type="protein sequence ID" value="BAB02568.1"/>
    <property type="status" value="ALT_SEQ"/>
    <property type="molecule type" value="Genomic_DNA"/>
</dbReference>
<dbReference type="EMBL" id="CP002686">
    <property type="protein sequence ID" value="AEE75624.1"/>
    <property type="molecule type" value="Genomic_DNA"/>
</dbReference>
<dbReference type="EMBL" id="AF419612">
    <property type="protein sequence ID" value="AAL31944.1"/>
    <property type="molecule type" value="mRNA"/>
</dbReference>
<dbReference type="EMBL" id="AY079112">
    <property type="protein sequence ID" value="AAL84996.1"/>
    <property type="molecule type" value="mRNA"/>
</dbReference>
<dbReference type="RefSeq" id="NP_566502.1">
    <property type="nucleotide sequence ID" value="NM_112377.2"/>
</dbReference>
<dbReference type="SMR" id="Q8W566"/>
<dbReference type="FunCoup" id="Q8W566">
    <property type="interactions" value="3528"/>
</dbReference>
<dbReference type="STRING" id="3702.Q8W566"/>
<dbReference type="PaxDb" id="3702-AT3G15140.1"/>
<dbReference type="ProteomicsDB" id="234635"/>
<dbReference type="EnsemblPlants" id="AT3G15140.1">
    <property type="protein sequence ID" value="AT3G15140.1"/>
    <property type="gene ID" value="AT3G15140"/>
</dbReference>
<dbReference type="GeneID" id="820745"/>
<dbReference type="Gramene" id="AT3G15140.1">
    <property type="protein sequence ID" value="AT3G15140.1"/>
    <property type="gene ID" value="AT3G15140"/>
</dbReference>
<dbReference type="KEGG" id="ath:AT3G15140"/>
<dbReference type="Araport" id="AT3G15140"/>
<dbReference type="TAIR" id="AT3G15140">
    <property type="gene designation" value="ERI-1"/>
</dbReference>
<dbReference type="eggNOG" id="KOG0542">
    <property type="taxonomic scope" value="Eukaryota"/>
</dbReference>
<dbReference type="HOGENOM" id="CLU_037266_2_0_1"/>
<dbReference type="InParanoid" id="Q8W566"/>
<dbReference type="PhylomeDB" id="Q8W566"/>
<dbReference type="PRO" id="PR:Q8W566"/>
<dbReference type="Proteomes" id="UP000006548">
    <property type="component" value="Chromosome 3"/>
</dbReference>
<dbReference type="ExpressionAtlas" id="Q8W566">
    <property type="expression patterns" value="baseline and differential"/>
</dbReference>
<dbReference type="GO" id="GO:0005739">
    <property type="term" value="C:mitochondrion"/>
    <property type="evidence" value="ECO:0007005"/>
    <property type="project" value="TAIR"/>
</dbReference>
<dbReference type="GO" id="GO:0000175">
    <property type="term" value="F:3'-5'-RNA exonuclease activity"/>
    <property type="evidence" value="ECO:0007669"/>
    <property type="project" value="InterPro"/>
</dbReference>
<dbReference type="GO" id="GO:0046872">
    <property type="term" value="F:metal ion binding"/>
    <property type="evidence" value="ECO:0007669"/>
    <property type="project" value="UniProtKB-KW"/>
</dbReference>
<dbReference type="GO" id="GO:0003676">
    <property type="term" value="F:nucleic acid binding"/>
    <property type="evidence" value="ECO:0007669"/>
    <property type="project" value="InterPro"/>
</dbReference>
<dbReference type="GO" id="GO:0016891">
    <property type="term" value="F:RNA endonuclease activity, producing 5'-phosphomonoesters"/>
    <property type="evidence" value="ECO:0000315"/>
    <property type="project" value="TAIR"/>
</dbReference>
<dbReference type="GO" id="GO:0035194">
    <property type="term" value="P:regulatory ncRNA-mediated post-transcriptional gene silencing"/>
    <property type="evidence" value="ECO:0000315"/>
    <property type="project" value="TAIR"/>
</dbReference>
<dbReference type="CDD" id="cd06133">
    <property type="entry name" value="ERI-1_3'hExo_like"/>
    <property type="match status" value="1"/>
</dbReference>
<dbReference type="FunFam" id="3.30.420.10:FF:000096">
    <property type="entry name" value="Uncharacterized exonuclease domain-containing protein At3g15140"/>
    <property type="match status" value="1"/>
</dbReference>
<dbReference type="Gene3D" id="3.30.420.10">
    <property type="entry name" value="Ribonuclease H-like superfamily/Ribonuclease H"/>
    <property type="match status" value="1"/>
</dbReference>
<dbReference type="InterPro" id="IPR051274">
    <property type="entry name" value="3-5_Exoribonuclease"/>
</dbReference>
<dbReference type="InterPro" id="IPR047201">
    <property type="entry name" value="ERI-1_3'hExo-like"/>
</dbReference>
<dbReference type="InterPro" id="IPR013520">
    <property type="entry name" value="Exonuclease_RNaseT/DNA_pol3"/>
</dbReference>
<dbReference type="InterPro" id="IPR012337">
    <property type="entry name" value="RNaseH-like_sf"/>
</dbReference>
<dbReference type="InterPro" id="IPR036397">
    <property type="entry name" value="RNaseH_sf"/>
</dbReference>
<dbReference type="PANTHER" id="PTHR23044">
    <property type="entry name" value="3'-5' EXONUCLEASE ERI1-RELATED"/>
    <property type="match status" value="1"/>
</dbReference>
<dbReference type="PANTHER" id="PTHR23044:SF61">
    <property type="entry name" value="3'-5' EXORIBONUCLEASE 1-RELATED"/>
    <property type="match status" value="1"/>
</dbReference>
<dbReference type="Pfam" id="PF00929">
    <property type="entry name" value="RNase_T"/>
    <property type="match status" value="1"/>
</dbReference>
<dbReference type="SMART" id="SM00479">
    <property type="entry name" value="EXOIII"/>
    <property type="match status" value="1"/>
</dbReference>
<dbReference type="SUPFAM" id="SSF53098">
    <property type="entry name" value="Ribonuclease H-like"/>
    <property type="match status" value="1"/>
</dbReference>
<feature type="chain" id="PRO_0000355993" description="Uncharacterized exonuclease domain-containing protein At3g15140">
    <location>
        <begin position="1"/>
        <end position="337"/>
    </location>
</feature>
<feature type="domain" description="Exonuclease">
    <location>
        <begin position="129"/>
        <end position="304"/>
    </location>
</feature>
<feature type="region of interest" description="Disordered" evidence="3">
    <location>
        <begin position="42"/>
        <end position="68"/>
    </location>
</feature>
<feature type="compositionally biased region" description="Low complexity" evidence="3">
    <location>
        <begin position="42"/>
        <end position="66"/>
    </location>
</feature>
<feature type="active site" description="Proton acceptor" evidence="2">
    <location>
        <position position="135"/>
    </location>
</feature>
<feature type="active site" description="Proton acceptor" evidence="2">
    <location>
        <position position="291"/>
    </location>
</feature>
<feature type="binding site" evidence="1">
    <location>
        <position position="133"/>
    </location>
    <ligand>
        <name>Mg(2+)</name>
        <dbReference type="ChEBI" id="CHEBI:18420"/>
        <label>1</label>
    </ligand>
</feature>
<feature type="binding site" evidence="1">
    <location>
        <position position="133"/>
    </location>
    <ligand>
        <name>Mg(2+)</name>
        <dbReference type="ChEBI" id="CHEBI:18420"/>
        <label>2</label>
    </ligand>
</feature>
<feature type="binding site" evidence="1">
    <location>
        <position position="135"/>
    </location>
    <ligand>
        <name>AMP</name>
        <dbReference type="ChEBI" id="CHEBI:456215"/>
    </ligand>
</feature>
<feature type="binding site" evidence="1">
    <location>
        <position position="135"/>
    </location>
    <ligand>
        <name>Mg(2+)</name>
        <dbReference type="ChEBI" id="CHEBI:18420"/>
        <label>1</label>
    </ligand>
</feature>
<feature type="binding site" evidence="1">
    <location>
        <position position="234"/>
    </location>
    <ligand>
        <name>Mg(2+)</name>
        <dbReference type="ChEBI" id="CHEBI:18420"/>
        <label>2</label>
    </ligand>
</feature>
<feature type="binding site" evidence="1">
    <location>
        <position position="291"/>
    </location>
    <ligand>
        <name>AMP</name>
        <dbReference type="ChEBI" id="CHEBI:456215"/>
    </ligand>
</feature>
<feature type="binding site" evidence="1">
    <location>
        <position position="296"/>
    </location>
    <ligand>
        <name>Mg(2+)</name>
        <dbReference type="ChEBI" id="CHEBI:18420"/>
        <label>1</label>
    </ligand>
</feature>
<proteinExistence type="evidence at transcript level"/>